<sequence length="1515" mass="166018">MTTELNQGEQFVADFRANAAALTTANAYNPEDEHDACGVGFIAAIDGKPRRSVVEKGIEALKAVWHRGAVDADGKTGDGAGIHVAVPQKFFKDHVKVIGHRAPDNKLAVGQVFLPRISLDAQEACRCIVETEILAFGYYIYGWRQVPINVDIIGEKANATRPEIEQIIVGNNKGVSDEQFELDLYIIRRRIEKAVKGEQINDFYICSLSARSIIYKGMFLAEQLTTFYPDLLDERFESDFAIYHQRYSTNTFPTWPLAQPFRMLAHNGEINTVKGNVNWMKAHETRMEHPAFGTHMQDLKPVIGVGLSDSGSLDTVFEVMVRAGRTAPMVKMMLVPQALTSSQTTPDNHKALIQYCNSVMEPWDGPAALAMTDGRWVVGGMDRNGLRPMRYTITTDGLIIGGSETGMVKIDETQVIEKGRLGPGEMIAVDLQSGKLYRDRELKDHLATLKPWDKWVQNTTHLDELVKTASLKGEPSDMDKAELRRRQQAFGLTMEDMELILHPMVEDGKEAIGSMGDDSPIAVLSDKYRGLHHFFRQNFSQVTNPPIDSLRERRVMSLKTRLGNLGNILDEDETQTRLLQLESPVLTTAEFRAMRDYMGDTAAEIDATFPVDGGPEALRDALRRIRQETEDAVRGGATHVILTDEAMGPARAAIPAILATGAVHTHLIRSNLRTFTSLNVRTAEGLDTHYFAVLIGVGATTVNAYLAQEAIAERHRRGLFGSMPLEKGMANYKKAIDDGLLKIMSKMGISVISSYRGGGNFEAIGLSRALVAEHFPAMVSRISGIGLNGIQKKVLEQHATAYNEEVVALPVGGFYRFRKSGDRHGWEGGVIHTLQQAVTNDSYTTFKKYSEQVNKRPPMQLRDLLELRSTKAPVPVDEVESITAIRKRFITPGMSMGALSPEAHGTLNVAMNRIGAKSDSGEGGEDPARFRPDKNGDNWNSAIKQVASGRFGVTAEYLNQCRELEIKVAQGAKPGEGGQLPGFKVTEMIARLRHSTPGVMLISPPPHHDIYSIEDLAQLIYDLKQINPDAKVTVKLVSRSGIGTIAAGVAKANADIILISGNSGGTGASPQTSIKFAGLPWEMGLSEVHQVLTLNRLRHRVRLRTDGGLKTGRDIVIAAMLGAEEFGIGTASLIAMGCIMVRQCHSNTCPVGVCVQDDKLRQKFVGTPEKVVNLFTFLAEEVREILAGLGFRSLNEVIGRTDLLHQVSRGAEHLDDLDLNPRLAQVDPGENARYCTLQGRNEVPDTLDARIVADARPLFEEGEKMQLAYNARNTQRAIGTRLSSMVTRKFGMFGLQPGHITIRLRGTAGQSLGAFAVQGIKLEVMGDANDYVGKGLSGGTIVVRPTTSSPLETNKNTIIGNTVLYGATAGKLFAAGQAGERFAVRNSGATVVVEGCGSNGCEYMTGGTAVILGRVGDNFAAGMTGGMAYVYDLDDSLPLYINDESVIFQRIEVGHYESQLKHLIEEHVTETQSRFAAEILNDWAREVTKFWQVVPKEMLNRLEVPVHLPKAISAE</sequence>
<accession>Q05755</accession>
<gene>
    <name type="primary">gltB</name>
</gene>
<feature type="propeptide" id="PRO_0000011618" evidence="4">
    <location>
        <begin position="1"/>
        <end position="36"/>
    </location>
</feature>
<feature type="chain" id="PRO_0000011619" description="Glutamate synthase [NADPH] large chain">
    <location>
        <begin position="37"/>
        <end position="1515"/>
    </location>
</feature>
<feature type="domain" description="Glutamine amidotransferase type-2" evidence="2">
    <location>
        <begin position="37"/>
        <end position="432"/>
    </location>
</feature>
<feature type="region of interest" description="Disordered" evidence="3">
    <location>
        <begin position="916"/>
        <end position="937"/>
    </location>
</feature>
<feature type="compositionally biased region" description="Basic and acidic residues" evidence="3">
    <location>
        <begin position="926"/>
        <end position="936"/>
    </location>
</feature>
<feature type="active site" description="For GATase activity" evidence="1">
    <location>
        <position position="37"/>
    </location>
</feature>
<feature type="binding site" evidence="1">
    <location>
        <begin position="1085"/>
        <end position="1142"/>
    </location>
    <ligand>
        <name>FMN</name>
        <dbReference type="ChEBI" id="CHEBI:58210"/>
    </ligand>
</feature>
<feature type="binding site" evidence="1">
    <location>
        <begin position="1086"/>
        <end position="1142"/>
    </location>
    <ligand>
        <name>FMN</name>
        <dbReference type="ChEBI" id="CHEBI:58210"/>
    </ligand>
</feature>
<feature type="binding site" evidence="1">
    <location>
        <position position="1138"/>
    </location>
    <ligand>
        <name>[3Fe-4S] cluster</name>
        <dbReference type="ChEBI" id="CHEBI:21137"/>
    </ligand>
</feature>
<feature type="binding site" evidence="1">
    <location>
        <position position="1144"/>
    </location>
    <ligand>
        <name>[3Fe-4S] cluster</name>
        <dbReference type="ChEBI" id="CHEBI:21137"/>
    </ligand>
</feature>
<feature type="binding site" evidence="1">
    <location>
        <position position="1149"/>
    </location>
    <ligand>
        <name>[3Fe-4S] cluster</name>
        <dbReference type="ChEBI" id="CHEBI:21137"/>
    </ligand>
</feature>
<feature type="strand" evidence="6">
    <location>
        <begin position="41"/>
        <end position="44"/>
    </location>
</feature>
<feature type="helix" evidence="6">
    <location>
        <begin position="51"/>
        <end position="61"/>
    </location>
</feature>
<feature type="helix" evidence="6">
    <location>
        <begin position="65"/>
        <end position="67"/>
    </location>
</feature>
<feature type="strand" evidence="7">
    <location>
        <begin position="72"/>
        <end position="75"/>
    </location>
</feature>
<feature type="strand" evidence="6">
    <location>
        <begin position="82"/>
        <end position="85"/>
    </location>
</feature>
<feature type="helix" evidence="6">
    <location>
        <begin position="88"/>
        <end position="97"/>
    </location>
</feature>
<feature type="strand" evidence="6">
    <location>
        <begin position="107"/>
        <end position="114"/>
    </location>
</feature>
<feature type="helix" evidence="6">
    <location>
        <begin position="119"/>
        <end position="135"/>
    </location>
</feature>
<feature type="strand" evidence="6">
    <location>
        <begin position="139"/>
        <end position="145"/>
    </location>
</feature>
<feature type="helix" evidence="6">
    <location>
        <begin position="150"/>
        <end position="152"/>
    </location>
</feature>
<feature type="helix" evidence="6">
    <location>
        <begin position="155"/>
        <end position="160"/>
    </location>
</feature>
<feature type="strand" evidence="6">
    <location>
        <begin position="163"/>
        <end position="170"/>
    </location>
</feature>
<feature type="helix" evidence="6">
    <location>
        <begin position="177"/>
        <end position="198"/>
    </location>
</feature>
<feature type="strand" evidence="6">
    <location>
        <begin position="204"/>
        <end position="214"/>
    </location>
</feature>
<feature type="strand" evidence="6">
    <location>
        <begin position="217"/>
        <end position="219"/>
    </location>
</feature>
<feature type="helix" evidence="6">
    <location>
        <begin position="221"/>
        <end position="223"/>
    </location>
</feature>
<feature type="helix" evidence="6">
    <location>
        <begin position="224"/>
        <end position="227"/>
    </location>
</feature>
<feature type="helix" evidence="6">
    <location>
        <begin position="229"/>
        <end position="232"/>
    </location>
</feature>
<feature type="strand" evidence="7">
    <location>
        <begin position="233"/>
        <end position="235"/>
    </location>
</feature>
<feature type="strand" evidence="6">
    <location>
        <begin position="238"/>
        <end position="245"/>
    </location>
</feature>
<feature type="strand" evidence="7">
    <location>
        <begin position="249"/>
        <end position="251"/>
    </location>
</feature>
<feature type="helix" evidence="7">
    <location>
        <begin position="255"/>
        <end position="257"/>
    </location>
</feature>
<feature type="strand" evidence="6">
    <location>
        <begin position="262"/>
        <end position="268"/>
    </location>
</feature>
<feature type="helix" evidence="6">
    <location>
        <begin position="273"/>
        <end position="283"/>
    </location>
</feature>
<feature type="helix" evidence="6">
    <location>
        <begin position="284"/>
        <end position="286"/>
    </location>
</feature>
<feature type="turn" evidence="7">
    <location>
        <begin position="290"/>
        <end position="292"/>
    </location>
</feature>
<feature type="helix" evidence="6">
    <location>
        <begin position="293"/>
        <end position="295"/>
    </location>
</feature>
<feature type="helix" evidence="6">
    <location>
        <begin position="296"/>
        <end position="299"/>
    </location>
</feature>
<feature type="helix" evidence="6">
    <location>
        <begin position="309"/>
        <end position="322"/>
    </location>
</feature>
<feature type="helix" evidence="6">
    <location>
        <begin position="327"/>
        <end position="334"/>
    </location>
</feature>
<feature type="strand" evidence="7">
    <location>
        <begin position="342"/>
        <end position="345"/>
    </location>
</feature>
<feature type="helix" evidence="6">
    <location>
        <begin position="347"/>
        <end position="359"/>
    </location>
</feature>
<feature type="strand" evidence="6">
    <location>
        <begin position="365"/>
        <end position="371"/>
    </location>
</feature>
<feature type="strand" evidence="6">
    <location>
        <begin position="373"/>
        <end position="380"/>
    </location>
</feature>
<feature type="strand" evidence="6">
    <location>
        <begin position="390"/>
        <end position="394"/>
    </location>
</feature>
<feature type="strand" evidence="6">
    <location>
        <begin position="397"/>
        <end position="401"/>
    </location>
</feature>
<feature type="strand" evidence="6">
    <location>
        <begin position="403"/>
        <end position="405"/>
    </location>
</feature>
<feature type="helix" evidence="6">
    <location>
        <begin position="412"/>
        <end position="414"/>
    </location>
</feature>
<feature type="strand" evidence="6">
    <location>
        <begin position="415"/>
        <end position="420"/>
    </location>
</feature>
<feature type="strand" evidence="6">
    <location>
        <begin position="426"/>
        <end position="430"/>
    </location>
</feature>
<feature type="turn" evidence="6">
    <location>
        <begin position="431"/>
        <end position="434"/>
    </location>
</feature>
<feature type="strand" evidence="6">
    <location>
        <begin position="435"/>
        <end position="437"/>
    </location>
</feature>
<feature type="helix" evidence="6">
    <location>
        <begin position="439"/>
        <end position="448"/>
    </location>
</feature>
<feature type="turn" evidence="6">
    <location>
        <begin position="449"/>
        <end position="451"/>
    </location>
</feature>
<feature type="helix" evidence="6">
    <location>
        <begin position="452"/>
        <end position="456"/>
    </location>
</feature>
<feature type="helix" evidence="6">
    <location>
        <begin position="464"/>
        <end position="471"/>
    </location>
</feature>
<feature type="helix" evidence="6">
    <location>
        <begin position="481"/>
        <end position="488"/>
    </location>
</feature>
<feature type="turn" evidence="6">
    <location>
        <begin position="489"/>
        <end position="491"/>
    </location>
</feature>
<feature type="helix" evidence="6">
    <location>
        <begin position="494"/>
        <end position="498"/>
    </location>
</feature>
<feature type="turn" evidence="6">
    <location>
        <begin position="499"/>
        <end position="501"/>
    </location>
</feature>
<feature type="helix" evidence="6">
    <location>
        <begin position="502"/>
        <end position="507"/>
    </location>
</feature>
<feature type="helix" evidence="6">
    <location>
        <begin position="522"/>
        <end position="524"/>
    </location>
</feature>
<feature type="helix" evidence="6">
    <location>
        <begin position="531"/>
        <end position="533"/>
    </location>
</feature>
<feature type="strand" evidence="6">
    <location>
        <begin position="535"/>
        <end position="537"/>
    </location>
</feature>
<feature type="strand" evidence="6">
    <location>
        <begin position="542"/>
        <end position="544"/>
    </location>
</feature>
<feature type="turn" evidence="6">
    <location>
        <begin position="549"/>
        <end position="552"/>
    </location>
</feature>
<feature type="helix" evidence="6">
    <location>
        <begin position="553"/>
        <end position="555"/>
    </location>
</feature>
<feature type="strand" evidence="6">
    <location>
        <begin position="560"/>
        <end position="563"/>
    </location>
</feature>
<feature type="helix" evidence="6">
    <location>
        <begin position="573"/>
        <end position="575"/>
    </location>
</feature>
<feature type="strand" evidence="6">
    <location>
        <begin position="578"/>
        <end position="582"/>
    </location>
</feature>
<feature type="strand" evidence="7">
    <location>
        <begin position="584"/>
        <end position="586"/>
    </location>
</feature>
<feature type="helix" evidence="6">
    <location>
        <begin position="588"/>
        <end position="598"/>
    </location>
</feature>
<feature type="helix" evidence="6">
    <location>
        <begin position="599"/>
        <end position="601"/>
    </location>
</feature>
<feature type="strand" evidence="6">
    <location>
        <begin position="602"/>
        <end position="606"/>
    </location>
</feature>
<feature type="strand" evidence="6">
    <location>
        <begin position="608"/>
        <end position="611"/>
    </location>
</feature>
<feature type="helix" evidence="6">
    <location>
        <begin position="617"/>
        <end position="635"/>
    </location>
</feature>
<feature type="strand" evidence="6">
    <location>
        <begin position="639"/>
        <end position="643"/>
    </location>
</feature>
<feature type="strand" evidence="6">
    <location>
        <begin position="651"/>
        <end position="653"/>
    </location>
</feature>
<feature type="helix" evidence="6">
    <location>
        <begin position="656"/>
        <end position="668"/>
    </location>
</feature>
<feature type="turn" evidence="6">
    <location>
        <begin position="669"/>
        <end position="671"/>
    </location>
</feature>
<feature type="helix" evidence="6">
    <location>
        <begin position="673"/>
        <end position="675"/>
    </location>
</feature>
<feature type="strand" evidence="6">
    <location>
        <begin position="677"/>
        <end position="681"/>
    </location>
</feature>
<feature type="helix" evidence="6">
    <location>
        <begin position="688"/>
        <end position="695"/>
    </location>
</feature>
<feature type="turn" evidence="6">
    <location>
        <begin position="696"/>
        <end position="698"/>
    </location>
</feature>
<feature type="strand" evidence="6">
    <location>
        <begin position="700"/>
        <end position="703"/>
    </location>
</feature>
<feature type="helix" evidence="6">
    <location>
        <begin position="705"/>
        <end position="715"/>
    </location>
</feature>
<feature type="turn" evidence="6">
    <location>
        <begin position="716"/>
        <end position="722"/>
    </location>
</feature>
<feature type="helix" evidence="6">
    <location>
        <begin position="725"/>
        <end position="745"/>
    </location>
</feature>
<feature type="turn" evidence="6">
    <location>
        <begin position="746"/>
        <end position="748"/>
    </location>
</feature>
<feature type="helix" evidence="6">
    <location>
        <begin position="752"/>
        <end position="755"/>
    </location>
</feature>
<feature type="strand" evidence="6">
    <location>
        <begin position="761"/>
        <end position="766"/>
    </location>
</feature>
<feature type="helix" evidence="6">
    <location>
        <begin position="768"/>
        <end position="774"/>
    </location>
</feature>
<feature type="strand" evidence="6">
    <location>
        <begin position="775"/>
        <end position="777"/>
    </location>
</feature>
<feature type="helix" evidence="6">
    <location>
        <begin position="787"/>
        <end position="802"/>
    </location>
</feature>
<feature type="strand" evidence="6">
    <location>
        <begin position="814"/>
        <end position="816"/>
    </location>
</feature>
<feature type="strand" evidence="6">
    <location>
        <begin position="819"/>
        <end position="822"/>
    </location>
</feature>
<feature type="helix" evidence="6">
    <location>
        <begin position="828"/>
        <end position="840"/>
    </location>
</feature>
<feature type="helix" evidence="6">
    <location>
        <begin position="843"/>
        <end position="854"/>
    </location>
</feature>
<feature type="helix" evidence="6">
    <location>
        <begin position="861"/>
        <end position="864"/>
    </location>
</feature>
<feature type="strand" evidence="6">
    <location>
        <begin position="865"/>
        <end position="867"/>
    </location>
</feature>
<feature type="helix" evidence="6">
    <location>
        <begin position="876"/>
        <end position="878"/>
    </location>
</feature>
<feature type="helix" evidence="6">
    <location>
        <begin position="882"/>
        <end position="886"/>
    </location>
</feature>
<feature type="strand" evidence="6">
    <location>
        <begin position="889"/>
        <end position="893"/>
    </location>
</feature>
<feature type="turn" evidence="7">
    <location>
        <begin position="896"/>
        <end position="898"/>
    </location>
</feature>
<feature type="helix" evidence="6">
    <location>
        <begin position="901"/>
        <end position="913"/>
    </location>
</feature>
<feature type="strand" evidence="6">
    <location>
        <begin position="917"/>
        <end position="919"/>
    </location>
</feature>
<feature type="helix" evidence="6">
    <location>
        <begin position="927"/>
        <end position="929"/>
    </location>
</feature>
<feature type="strand" evidence="6">
    <location>
        <begin position="930"/>
        <end position="932"/>
    </location>
</feature>
<feature type="strand" evidence="7">
    <location>
        <begin position="934"/>
        <end position="936"/>
    </location>
</feature>
<feature type="strand" evidence="6">
    <location>
        <begin position="942"/>
        <end position="946"/>
    </location>
</feature>
<feature type="helix" evidence="6">
    <location>
        <begin position="955"/>
        <end position="958"/>
    </location>
</feature>
<feature type="strand" evidence="6">
    <location>
        <begin position="962"/>
        <end position="967"/>
    </location>
</feature>
<feature type="strand" evidence="7">
    <location>
        <begin position="971"/>
        <end position="973"/>
    </location>
</feature>
<feature type="turn" evidence="6">
    <location>
        <begin position="974"/>
        <end position="976"/>
    </location>
</feature>
<feature type="helix" evidence="6">
    <location>
        <begin position="982"/>
        <end position="984"/>
    </location>
</feature>
<feature type="helix" evidence="6">
    <location>
        <begin position="987"/>
        <end position="993"/>
    </location>
</feature>
<feature type="helix" evidence="6">
    <location>
        <begin position="1013"/>
        <end position="1026"/>
    </location>
</feature>
<feature type="strand" evidence="6">
    <location>
        <begin position="1031"/>
        <end position="1037"/>
    </location>
</feature>
<feature type="helix" evidence="6">
    <location>
        <begin position="1042"/>
        <end position="1051"/>
    </location>
</feature>
<feature type="strand" evidence="6">
    <location>
        <begin position="1055"/>
        <end position="1060"/>
    </location>
</feature>
<feature type="strand" evidence="6">
    <location>
        <begin position="1067"/>
        <end position="1070"/>
    </location>
</feature>
<feature type="helix" evidence="6">
    <location>
        <begin position="1073"/>
        <end position="1076"/>
    </location>
</feature>
<feature type="helix" evidence="6">
    <location>
        <begin position="1081"/>
        <end position="1093"/>
    </location>
</feature>
<feature type="turn" evidence="6">
    <location>
        <begin position="1094"/>
        <end position="1096"/>
    </location>
</feature>
<feature type="strand" evidence="6">
    <location>
        <begin position="1100"/>
        <end position="1108"/>
    </location>
</feature>
<feature type="helix" evidence="6">
    <location>
        <begin position="1112"/>
        <end position="1120"/>
    </location>
</feature>
<feature type="strand" evidence="6">
    <location>
        <begin position="1124"/>
        <end position="1127"/>
    </location>
</feature>
<feature type="helix" evidence="6">
    <location>
        <begin position="1130"/>
        <end position="1136"/>
    </location>
</feature>
<feature type="turn" evidence="6">
    <location>
        <begin position="1144"/>
        <end position="1147"/>
    </location>
</feature>
<feature type="strand" evidence="6">
    <location>
        <begin position="1152"/>
        <end position="1154"/>
    </location>
</feature>
<feature type="helix" evidence="6">
    <location>
        <begin position="1160"/>
        <end position="1162"/>
    </location>
</feature>
<feature type="helix" evidence="6">
    <location>
        <begin position="1168"/>
        <end position="1189"/>
    </location>
</feature>
<feature type="helix" evidence="6">
    <location>
        <begin position="1195"/>
        <end position="1197"/>
    </location>
</feature>
<feature type="helix" evidence="6">
    <location>
        <begin position="1201"/>
        <end position="1203"/>
    </location>
</feature>
<feature type="strand" evidence="6">
    <location>
        <begin position="1204"/>
        <end position="1206"/>
    </location>
</feature>
<feature type="turn" evidence="7">
    <location>
        <begin position="1211"/>
        <end position="1213"/>
    </location>
</feature>
<feature type="helix" evidence="6">
    <location>
        <begin position="1220"/>
        <end position="1223"/>
    </location>
</feature>
<feature type="helix" evidence="6">
    <location>
        <begin position="1248"/>
        <end position="1254"/>
    </location>
</feature>
<feature type="helix" evidence="6">
    <location>
        <begin position="1256"/>
        <end position="1261"/>
    </location>
</feature>
<feature type="strand" evidence="6">
    <location>
        <begin position="1265"/>
        <end position="1271"/>
    </location>
</feature>
<feature type="helix" evidence="6">
    <location>
        <begin position="1280"/>
        <end position="1289"/>
    </location>
</feature>
<feature type="turn" evidence="6">
    <location>
        <begin position="1290"/>
        <end position="1293"/>
    </location>
</feature>
<feature type="strand" evidence="6">
    <location>
        <begin position="1299"/>
        <end position="1308"/>
    </location>
</feature>
<feature type="turn" evidence="6">
    <location>
        <begin position="1312"/>
        <end position="1315"/>
    </location>
</feature>
<feature type="strand" evidence="6">
    <location>
        <begin position="1320"/>
        <end position="1328"/>
    </location>
</feature>
<feature type="turn" evidence="6">
    <location>
        <begin position="1332"/>
        <end position="1335"/>
    </location>
</feature>
<feature type="strand" evidence="6">
    <location>
        <begin position="1337"/>
        <end position="1344"/>
    </location>
</feature>
<feature type="helix" evidence="6">
    <location>
        <begin position="1353"/>
        <end position="1355"/>
    </location>
</feature>
<feature type="strand" evidence="6">
    <location>
        <begin position="1356"/>
        <end position="1359"/>
    </location>
</feature>
<feature type="turn" evidence="6">
    <location>
        <begin position="1363"/>
        <end position="1366"/>
    </location>
</feature>
<feature type="strand" evidence="6">
    <location>
        <begin position="1369"/>
        <end position="1378"/>
    </location>
</feature>
<feature type="turn" evidence="6">
    <location>
        <begin position="1380"/>
        <end position="1385"/>
    </location>
</feature>
<feature type="strand" evidence="6">
    <location>
        <begin position="1387"/>
        <end position="1394"/>
    </location>
</feature>
<feature type="turn" evidence="6">
    <location>
        <begin position="1400"/>
        <end position="1403"/>
    </location>
</feature>
<feature type="strand" evidence="6">
    <location>
        <begin position="1406"/>
        <end position="1409"/>
    </location>
</feature>
<feature type="strand" evidence="6">
    <location>
        <begin position="1417"/>
        <end position="1419"/>
    </location>
</feature>
<feature type="turn" evidence="6">
    <location>
        <begin position="1420"/>
        <end position="1422"/>
    </location>
</feature>
<feature type="strand" evidence="6">
    <location>
        <begin position="1425"/>
        <end position="1428"/>
    </location>
</feature>
<feature type="strand" evidence="7">
    <location>
        <begin position="1433"/>
        <end position="1435"/>
    </location>
</feature>
<feature type="helix" evidence="6">
    <location>
        <begin position="1437"/>
        <end position="1440"/>
    </location>
</feature>
<feature type="helix" evidence="6">
    <location>
        <begin position="1443"/>
        <end position="1445"/>
    </location>
</feature>
<feature type="strand" evidence="6">
    <location>
        <begin position="1446"/>
        <end position="1449"/>
    </location>
</feature>
<feature type="helix" evidence="6">
    <location>
        <begin position="1456"/>
        <end position="1471"/>
    </location>
</feature>
<feature type="helix" evidence="6">
    <location>
        <begin position="1474"/>
        <end position="1481"/>
    </location>
</feature>
<feature type="helix" evidence="6">
    <location>
        <begin position="1483"/>
        <end position="1487"/>
    </location>
</feature>
<feature type="strand" evidence="6">
    <location>
        <begin position="1492"/>
        <end position="1495"/>
    </location>
</feature>
<feature type="helix" evidence="6">
    <location>
        <begin position="1496"/>
        <end position="1501"/>
    </location>
</feature>
<feature type="strand" evidence="8">
    <location>
        <begin position="1502"/>
        <end position="1504"/>
    </location>
</feature>
<evidence type="ECO:0000250" key="1"/>
<evidence type="ECO:0000255" key="2">
    <source>
        <dbReference type="PROSITE-ProRule" id="PRU00609"/>
    </source>
</evidence>
<evidence type="ECO:0000256" key="3">
    <source>
        <dbReference type="SAM" id="MobiDB-lite"/>
    </source>
</evidence>
<evidence type="ECO:0000269" key="4">
    <source>
    </source>
</evidence>
<evidence type="ECO:0000305" key="5"/>
<evidence type="ECO:0007829" key="6">
    <source>
        <dbReference type="PDB" id="1EA0"/>
    </source>
</evidence>
<evidence type="ECO:0007829" key="7">
    <source>
        <dbReference type="PDB" id="6S6U"/>
    </source>
</evidence>
<evidence type="ECO:0007829" key="8">
    <source>
        <dbReference type="PDB" id="6S6X"/>
    </source>
</evidence>
<reference key="1">
    <citation type="journal article" date="1993" name="J. Biol. Chem.">
        <title>Glutamate synthase genes of the diazotroph Azospirillum brasilense. Cloning, sequencing, and analysis of functional domains.</title>
        <authorList>
            <person name="Pelanda R."/>
            <person name="Vanoni M.A."/>
            <person name="Perego M."/>
            <person name="Piubelli L."/>
            <person name="Galizzi A."/>
            <person name="Curti B."/>
            <person name="Zanetti G."/>
        </authorList>
    </citation>
    <scope>NUCLEOTIDE SEQUENCE [GENOMIC DNA]</scope>
    <scope>PROTEIN SEQUENCE OF 37-56; 778-799 AND 1325-1345</scope>
    <source>
        <strain>ATCC 29145 / DSM 1690 / IMET 11303 / Sp7</strain>
    </source>
</reference>
<reference key="2">
    <citation type="journal article" date="1993" name="J. Bacteriol.">
        <title>Isolation of a glutamate synthase (GOGAT)-negative, pleiotropically N utilization-defective mutant of Azospirillum brasilense: cloning and partial characterization of GOGAT structural gene.</title>
        <authorList>
            <person name="Mandal A.K."/>
            <person name="Ghosh S."/>
        </authorList>
    </citation>
    <scope>NUCLEOTIDE SEQUENCE [GENOMIC DNA] OF 834-927</scope>
    <source>
        <strain>RG</strain>
    </source>
</reference>
<reference key="3">
    <citation type="journal article" date="1990" name="Biochim. Biophys. Acta">
        <title>Structural studies on the subunits of glutamate synthase from Azospirillum brasilense.</title>
        <authorList>
            <person name="Vanoni M.A."/>
            <person name="Negri A."/>
            <person name="Zanetti G."/>
            <person name="Ronchi S."/>
            <person name="Curti B."/>
        </authorList>
    </citation>
    <scope>PARTIAL PROTEIN SEQUENCE</scope>
</reference>
<keyword id="KW-0002">3D-structure</keyword>
<keyword id="KW-0003">3Fe-4S</keyword>
<keyword id="KW-0028">Amino-acid biosynthesis</keyword>
<keyword id="KW-0903">Direct protein sequencing</keyword>
<keyword id="KW-0274">FAD</keyword>
<keyword id="KW-0285">Flavoprotein</keyword>
<keyword id="KW-0288">FMN</keyword>
<keyword id="KW-0314">Glutamate biosynthesis</keyword>
<keyword id="KW-0315">Glutamine amidotransferase</keyword>
<keyword id="KW-0408">Iron</keyword>
<keyword id="KW-0411">Iron-sulfur</keyword>
<keyword id="KW-0479">Metal-binding</keyword>
<keyword id="KW-0521">NADP</keyword>
<keyword id="KW-0560">Oxidoreductase</keyword>
<keyword id="KW-0865">Zymogen</keyword>
<name>GLTB_AZOBR</name>
<organism>
    <name type="scientific">Azospirillum brasilense</name>
    <dbReference type="NCBI Taxonomy" id="192"/>
    <lineage>
        <taxon>Bacteria</taxon>
        <taxon>Pseudomonadati</taxon>
        <taxon>Pseudomonadota</taxon>
        <taxon>Alphaproteobacteria</taxon>
        <taxon>Rhodospirillales</taxon>
        <taxon>Azospirillaceae</taxon>
        <taxon>Azospirillum</taxon>
    </lineage>
</organism>
<proteinExistence type="evidence at protein level"/>
<protein>
    <recommendedName>
        <fullName>Glutamate synthase [NADPH] large chain</fullName>
        <ecNumber>1.4.1.13</ecNumber>
    </recommendedName>
    <alternativeName>
        <fullName>Glutamate synthase subunit alpha</fullName>
        <shortName>GLTS alpha chain</shortName>
    </alternativeName>
    <alternativeName>
        <fullName>NADPH-GOGAT</fullName>
    </alternativeName>
</protein>
<comment type="catalytic activity">
    <reaction>
        <text>2 L-glutamate + NADP(+) = L-glutamine + 2-oxoglutarate + NADPH + H(+)</text>
        <dbReference type="Rhea" id="RHEA:15501"/>
        <dbReference type="ChEBI" id="CHEBI:15378"/>
        <dbReference type="ChEBI" id="CHEBI:16810"/>
        <dbReference type="ChEBI" id="CHEBI:29985"/>
        <dbReference type="ChEBI" id="CHEBI:57783"/>
        <dbReference type="ChEBI" id="CHEBI:58349"/>
        <dbReference type="ChEBI" id="CHEBI:58359"/>
        <dbReference type="EC" id="1.4.1.13"/>
    </reaction>
</comment>
<comment type="cofactor">
    <cofactor>
        <name>[3Fe-4S] cluster</name>
        <dbReference type="ChEBI" id="CHEBI:21137"/>
    </cofactor>
    <text>Binds 1 [3Fe-4S] cluster.</text>
</comment>
<comment type="cofactor">
    <cofactor>
        <name>FAD</name>
        <dbReference type="ChEBI" id="CHEBI:57692"/>
    </cofactor>
</comment>
<comment type="cofactor">
    <cofactor>
        <name>FMN</name>
        <dbReference type="ChEBI" id="CHEBI:58210"/>
    </cofactor>
</comment>
<comment type="pathway">
    <text>Amino-acid biosynthesis; L-glutamate biosynthesis via GLT pathway; L-glutamate from 2-oxoglutarate and L-glutamine (NADP(+) route): step 1/1.</text>
</comment>
<comment type="pathway">
    <text>Energy metabolism; nitrogen metabolism.</text>
</comment>
<comment type="subunit">
    <text>Aggregate of 4 catalytic active heterodimers, consisting of a large and a small subunit.</text>
</comment>
<comment type="miscellaneous">
    <text>Glutamine binds to the large subunit and transfers the amido group to 2-oxo-glutamate that apparently binds to the small subunit.</text>
</comment>
<comment type="similarity">
    <text evidence="5">Belongs to the glutamate synthase family.</text>
</comment>
<dbReference type="EC" id="1.4.1.13"/>
<dbReference type="EMBL" id="AF192408">
    <property type="protein sequence ID" value="AAA22179.1"/>
    <property type="molecule type" value="Genomic_DNA"/>
</dbReference>
<dbReference type="EMBL" id="X71632">
    <property type="protein sequence ID" value="CAA50639.1"/>
    <property type="molecule type" value="Genomic_DNA"/>
</dbReference>
<dbReference type="PIR" id="B46602">
    <property type="entry name" value="B46602"/>
</dbReference>
<dbReference type="PDB" id="1EA0">
    <property type="method" value="X-ray"/>
    <property type="resolution" value="3.00 A"/>
    <property type="chains" value="A/B=37-1515"/>
</dbReference>
<dbReference type="PDB" id="2VDC">
    <property type="method" value="EM"/>
    <property type="resolution" value="9.50 A"/>
    <property type="chains" value="A/B/C/D/E/F=37-1508"/>
</dbReference>
<dbReference type="PDB" id="6S6S">
    <property type="method" value="EM"/>
    <property type="resolution" value="3.90 A"/>
    <property type="chains" value="A/B/C/D=1-1515"/>
</dbReference>
<dbReference type="PDB" id="6S6T">
    <property type="method" value="EM"/>
    <property type="resolution" value="4.10 A"/>
    <property type="chains" value="A/B/C/D=1-1515"/>
</dbReference>
<dbReference type="PDB" id="6S6U">
    <property type="method" value="EM"/>
    <property type="resolution" value="3.50 A"/>
    <property type="chains" value="A/B/C/D/E/F=1-1515"/>
</dbReference>
<dbReference type="PDB" id="6S6X">
    <property type="method" value="EM"/>
    <property type="resolution" value="3.50 A"/>
    <property type="chains" value="A/B/C/D/E/F=1-1515"/>
</dbReference>
<dbReference type="PDBsum" id="1EA0"/>
<dbReference type="PDBsum" id="2VDC"/>
<dbReference type="PDBsum" id="6S6S"/>
<dbReference type="PDBsum" id="6S6T"/>
<dbReference type="PDBsum" id="6S6U"/>
<dbReference type="PDBsum" id="6S6X"/>
<dbReference type="EMDB" id="EMD-10104"/>
<dbReference type="EMDB" id="EMD-10105"/>
<dbReference type="EMDB" id="EMD-10106"/>
<dbReference type="EMDB" id="EMD-10108"/>
<dbReference type="EMDB" id="EMD-1440"/>
<dbReference type="SASBDB" id="Q05755"/>
<dbReference type="SMR" id="Q05755"/>
<dbReference type="MEROPS" id="C44.003"/>
<dbReference type="KEGG" id="ag:AAA22179"/>
<dbReference type="BioCyc" id="MetaCyc:MONOMER-13079"/>
<dbReference type="BRENDA" id="1.4.1.13">
    <property type="organism ID" value="611"/>
</dbReference>
<dbReference type="UniPathway" id="UPA00045"/>
<dbReference type="UniPathway" id="UPA00634">
    <property type="reaction ID" value="UER00689"/>
</dbReference>
<dbReference type="EvolutionaryTrace" id="Q05755"/>
<dbReference type="GO" id="GO:0051538">
    <property type="term" value="F:3 iron, 4 sulfur cluster binding"/>
    <property type="evidence" value="ECO:0007669"/>
    <property type="project" value="UniProtKB-KW"/>
</dbReference>
<dbReference type="GO" id="GO:0004355">
    <property type="term" value="F:glutamate synthase (NADPH) activity"/>
    <property type="evidence" value="ECO:0007669"/>
    <property type="project" value="UniProtKB-EC"/>
</dbReference>
<dbReference type="GO" id="GO:0046872">
    <property type="term" value="F:metal ion binding"/>
    <property type="evidence" value="ECO:0007669"/>
    <property type="project" value="UniProtKB-KW"/>
</dbReference>
<dbReference type="GO" id="GO:0019676">
    <property type="term" value="P:ammonia assimilation cycle"/>
    <property type="evidence" value="ECO:0007669"/>
    <property type="project" value="TreeGrafter"/>
</dbReference>
<dbReference type="GO" id="GO:0097054">
    <property type="term" value="P:L-glutamate biosynthetic process"/>
    <property type="evidence" value="ECO:0007669"/>
    <property type="project" value="UniProtKB-UniPathway"/>
</dbReference>
<dbReference type="CDD" id="cd00982">
    <property type="entry name" value="gltB_C"/>
    <property type="match status" value="1"/>
</dbReference>
<dbReference type="CDD" id="cd00713">
    <property type="entry name" value="GltS"/>
    <property type="match status" value="1"/>
</dbReference>
<dbReference type="CDD" id="cd02808">
    <property type="entry name" value="GltS_FMN"/>
    <property type="match status" value="1"/>
</dbReference>
<dbReference type="FunFam" id="2.160.20.60:FF:000001">
    <property type="entry name" value="Glutamate synthase, large subunit"/>
    <property type="match status" value="1"/>
</dbReference>
<dbReference type="FunFam" id="3.20.20.70:FF:000097">
    <property type="entry name" value="Glutamate synthase, large subunit"/>
    <property type="match status" value="1"/>
</dbReference>
<dbReference type="FunFam" id="3.60.20.10:FF:000001">
    <property type="entry name" value="Glutamate synthase, large subunit"/>
    <property type="match status" value="1"/>
</dbReference>
<dbReference type="Gene3D" id="3.20.20.70">
    <property type="entry name" value="Aldolase class I"/>
    <property type="match status" value="2"/>
</dbReference>
<dbReference type="Gene3D" id="2.160.20.60">
    <property type="entry name" value="Glutamate synthase, alpha subunit, C-terminal domain"/>
    <property type="match status" value="1"/>
</dbReference>
<dbReference type="Gene3D" id="3.60.20.10">
    <property type="entry name" value="Glutamine Phosphoribosylpyrophosphate, subunit 1, domain 1"/>
    <property type="match status" value="1"/>
</dbReference>
<dbReference type="InterPro" id="IPR013785">
    <property type="entry name" value="Aldolase_TIM"/>
</dbReference>
<dbReference type="InterPro" id="IPR050711">
    <property type="entry name" value="ET-N_metabolism_enzyme"/>
</dbReference>
<dbReference type="InterPro" id="IPR017932">
    <property type="entry name" value="GATase_2_dom"/>
</dbReference>
<dbReference type="InterPro" id="IPR002489">
    <property type="entry name" value="Glu_synth_asu_C"/>
</dbReference>
<dbReference type="InterPro" id="IPR036485">
    <property type="entry name" value="Glu_synth_asu_C_sf"/>
</dbReference>
<dbReference type="InterPro" id="IPR006982">
    <property type="entry name" value="Glu_synth_centr_N"/>
</dbReference>
<dbReference type="InterPro" id="IPR002932">
    <property type="entry name" value="Glu_synthdom"/>
</dbReference>
<dbReference type="InterPro" id="IPR029055">
    <property type="entry name" value="Ntn_hydrolases_N"/>
</dbReference>
<dbReference type="NCBIfam" id="NF008730">
    <property type="entry name" value="PRK11750.1"/>
    <property type="match status" value="1"/>
</dbReference>
<dbReference type="PANTHER" id="PTHR11938">
    <property type="entry name" value="FAD NADPH DEHYDROGENASE/OXIDOREDUCTASE"/>
    <property type="match status" value="1"/>
</dbReference>
<dbReference type="PANTHER" id="PTHR11938:SF133">
    <property type="entry name" value="GLUTAMATE SYNTHASE (NADH)"/>
    <property type="match status" value="1"/>
</dbReference>
<dbReference type="Pfam" id="PF00310">
    <property type="entry name" value="GATase_2"/>
    <property type="match status" value="1"/>
</dbReference>
<dbReference type="Pfam" id="PF04898">
    <property type="entry name" value="Glu_syn_central"/>
    <property type="match status" value="1"/>
</dbReference>
<dbReference type="Pfam" id="PF01645">
    <property type="entry name" value="Glu_synthase"/>
    <property type="match status" value="1"/>
</dbReference>
<dbReference type="Pfam" id="PF01493">
    <property type="entry name" value="GXGXG"/>
    <property type="match status" value="1"/>
</dbReference>
<dbReference type="SUPFAM" id="SSF69336">
    <property type="entry name" value="Alpha subunit of glutamate synthase, C-terminal domain"/>
    <property type="match status" value="1"/>
</dbReference>
<dbReference type="SUPFAM" id="SSF51395">
    <property type="entry name" value="FMN-linked oxidoreductases"/>
    <property type="match status" value="1"/>
</dbReference>
<dbReference type="SUPFAM" id="SSF56235">
    <property type="entry name" value="N-terminal nucleophile aminohydrolases (Ntn hydrolases)"/>
    <property type="match status" value="1"/>
</dbReference>
<dbReference type="PROSITE" id="PS51278">
    <property type="entry name" value="GATASE_TYPE_2"/>
    <property type="match status" value="1"/>
</dbReference>